<keyword id="KW-0963">Cytoplasm</keyword>
<keyword id="KW-0444">Lipid biosynthesis</keyword>
<keyword id="KW-0443">Lipid metabolism</keyword>
<keyword id="KW-0520">NAD</keyword>
<keyword id="KW-0521">NADP</keyword>
<keyword id="KW-0547">Nucleotide-binding</keyword>
<keyword id="KW-0560">Oxidoreductase</keyword>
<keyword id="KW-0594">Phospholipid biosynthesis</keyword>
<keyword id="KW-1208">Phospholipid metabolism</keyword>
<accession>B4TZV1</accession>
<comment type="function">
    <text evidence="1">Catalyzes the reduction of the glycolytic intermediate dihydroxyacetone phosphate (DHAP) to sn-glycerol 3-phosphate (G3P), the key precursor for phospholipid synthesis.</text>
</comment>
<comment type="catalytic activity">
    <reaction evidence="1">
        <text>sn-glycerol 3-phosphate + NAD(+) = dihydroxyacetone phosphate + NADH + H(+)</text>
        <dbReference type="Rhea" id="RHEA:11092"/>
        <dbReference type="ChEBI" id="CHEBI:15378"/>
        <dbReference type="ChEBI" id="CHEBI:57540"/>
        <dbReference type="ChEBI" id="CHEBI:57597"/>
        <dbReference type="ChEBI" id="CHEBI:57642"/>
        <dbReference type="ChEBI" id="CHEBI:57945"/>
        <dbReference type="EC" id="1.1.1.94"/>
    </reaction>
    <physiologicalReaction direction="right-to-left" evidence="1">
        <dbReference type="Rhea" id="RHEA:11094"/>
    </physiologicalReaction>
</comment>
<comment type="catalytic activity">
    <reaction evidence="1">
        <text>sn-glycerol 3-phosphate + NADP(+) = dihydroxyacetone phosphate + NADPH + H(+)</text>
        <dbReference type="Rhea" id="RHEA:11096"/>
        <dbReference type="ChEBI" id="CHEBI:15378"/>
        <dbReference type="ChEBI" id="CHEBI:57597"/>
        <dbReference type="ChEBI" id="CHEBI:57642"/>
        <dbReference type="ChEBI" id="CHEBI:57783"/>
        <dbReference type="ChEBI" id="CHEBI:58349"/>
        <dbReference type="EC" id="1.1.1.94"/>
    </reaction>
    <physiologicalReaction direction="right-to-left" evidence="1">
        <dbReference type="Rhea" id="RHEA:11098"/>
    </physiologicalReaction>
</comment>
<comment type="pathway">
    <text evidence="1">Membrane lipid metabolism; glycerophospholipid metabolism.</text>
</comment>
<comment type="subcellular location">
    <subcellularLocation>
        <location evidence="1">Cytoplasm</location>
    </subcellularLocation>
</comment>
<comment type="similarity">
    <text evidence="1">Belongs to the NAD-dependent glycerol-3-phosphate dehydrogenase family.</text>
</comment>
<reference key="1">
    <citation type="journal article" date="2011" name="J. Bacteriol.">
        <title>Comparative genomics of 28 Salmonella enterica isolates: evidence for CRISPR-mediated adaptive sublineage evolution.</title>
        <authorList>
            <person name="Fricke W.F."/>
            <person name="Mammel M.K."/>
            <person name="McDermott P.F."/>
            <person name="Tartera C."/>
            <person name="White D.G."/>
            <person name="Leclerc J.E."/>
            <person name="Ravel J."/>
            <person name="Cebula T.A."/>
        </authorList>
    </citation>
    <scope>NUCLEOTIDE SEQUENCE [LARGE SCALE GENOMIC DNA]</scope>
    <source>
        <strain>CVM19633</strain>
    </source>
</reference>
<organism>
    <name type="scientific">Salmonella schwarzengrund (strain CVM19633)</name>
    <dbReference type="NCBI Taxonomy" id="439843"/>
    <lineage>
        <taxon>Bacteria</taxon>
        <taxon>Pseudomonadati</taxon>
        <taxon>Pseudomonadota</taxon>
        <taxon>Gammaproteobacteria</taxon>
        <taxon>Enterobacterales</taxon>
        <taxon>Enterobacteriaceae</taxon>
        <taxon>Salmonella</taxon>
    </lineage>
</organism>
<sequence>MNQSNASMTVIGAGSYGTALAITLARNGHQVVLWGHDPKHIATLEHDRCNVAFLPDVPFPDTLHLESDLATALAASRNILVVVPSHVFSDVLRQIKPLMRPDARLVWATKGLEAETGRLLQDVAREALGDQIPLAVISGPTFAKELAAGLPTAISLASTDETFADDLQQLLHCGKSFRVYINADFIGVQLGGAVKNVIAIGAGMSDGIGFGANARTALITRGLTEMSRLGAALGADPATFMGMAGLGDLVLTCTDNQSRNRRFGMMLGQGMDVKGAQDKIGQVVEGYRNTKEVRELAHRFGVEMPITEEIYQVLYCGKNAREAALTLLGRARKEELSRH</sequence>
<name>GPDA_SALSV</name>
<proteinExistence type="inferred from homology"/>
<dbReference type="EC" id="1.1.1.94" evidence="1"/>
<dbReference type="EMBL" id="CP001127">
    <property type="protein sequence ID" value="ACF91831.1"/>
    <property type="molecule type" value="Genomic_DNA"/>
</dbReference>
<dbReference type="RefSeq" id="WP_001076596.1">
    <property type="nucleotide sequence ID" value="NC_011094.1"/>
</dbReference>
<dbReference type="SMR" id="B4TZV1"/>
<dbReference type="KEGG" id="sew:SeSA_A3899"/>
<dbReference type="HOGENOM" id="CLU_033449_0_2_6"/>
<dbReference type="UniPathway" id="UPA00940"/>
<dbReference type="Proteomes" id="UP000001865">
    <property type="component" value="Chromosome"/>
</dbReference>
<dbReference type="GO" id="GO:0005829">
    <property type="term" value="C:cytosol"/>
    <property type="evidence" value="ECO:0007669"/>
    <property type="project" value="TreeGrafter"/>
</dbReference>
<dbReference type="GO" id="GO:0047952">
    <property type="term" value="F:glycerol-3-phosphate dehydrogenase [NAD(P)+] activity"/>
    <property type="evidence" value="ECO:0007669"/>
    <property type="project" value="UniProtKB-UniRule"/>
</dbReference>
<dbReference type="GO" id="GO:0051287">
    <property type="term" value="F:NAD binding"/>
    <property type="evidence" value="ECO:0007669"/>
    <property type="project" value="InterPro"/>
</dbReference>
<dbReference type="GO" id="GO:0005975">
    <property type="term" value="P:carbohydrate metabolic process"/>
    <property type="evidence" value="ECO:0007669"/>
    <property type="project" value="InterPro"/>
</dbReference>
<dbReference type="GO" id="GO:0046167">
    <property type="term" value="P:glycerol-3-phosphate biosynthetic process"/>
    <property type="evidence" value="ECO:0007669"/>
    <property type="project" value="UniProtKB-UniRule"/>
</dbReference>
<dbReference type="GO" id="GO:0046168">
    <property type="term" value="P:glycerol-3-phosphate catabolic process"/>
    <property type="evidence" value="ECO:0007669"/>
    <property type="project" value="InterPro"/>
</dbReference>
<dbReference type="GO" id="GO:0046474">
    <property type="term" value="P:glycerophospholipid biosynthetic process"/>
    <property type="evidence" value="ECO:0007669"/>
    <property type="project" value="TreeGrafter"/>
</dbReference>
<dbReference type="FunFam" id="1.10.1040.10:FF:000001">
    <property type="entry name" value="Glycerol-3-phosphate dehydrogenase [NAD(P)+]"/>
    <property type="match status" value="1"/>
</dbReference>
<dbReference type="FunFam" id="3.40.50.720:FF:000019">
    <property type="entry name" value="Glycerol-3-phosphate dehydrogenase [NAD(P)+]"/>
    <property type="match status" value="1"/>
</dbReference>
<dbReference type="Gene3D" id="1.10.1040.10">
    <property type="entry name" value="N-(1-d-carboxylethyl)-l-norvaline Dehydrogenase, domain 2"/>
    <property type="match status" value="1"/>
</dbReference>
<dbReference type="Gene3D" id="3.40.50.720">
    <property type="entry name" value="NAD(P)-binding Rossmann-like Domain"/>
    <property type="match status" value="1"/>
</dbReference>
<dbReference type="HAMAP" id="MF_00394">
    <property type="entry name" value="NAD_Glyc3P_dehydrog"/>
    <property type="match status" value="1"/>
</dbReference>
<dbReference type="InterPro" id="IPR008927">
    <property type="entry name" value="6-PGluconate_DH-like_C_sf"/>
</dbReference>
<dbReference type="InterPro" id="IPR013328">
    <property type="entry name" value="6PGD_dom2"/>
</dbReference>
<dbReference type="InterPro" id="IPR006168">
    <property type="entry name" value="G3P_DH_NAD-dep"/>
</dbReference>
<dbReference type="InterPro" id="IPR006109">
    <property type="entry name" value="G3P_DH_NAD-dep_C"/>
</dbReference>
<dbReference type="InterPro" id="IPR011128">
    <property type="entry name" value="G3P_DH_NAD-dep_N"/>
</dbReference>
<dbReference type="InterPro" id="IPR036291">
    <property type="entry name" value="NAD(P)-bd_dom_sf"/>
</dbReference>
<dbReference type="NCBIfam" id="NF000939">
    <property type="entry name" value="PRK00094.1-1"/>
    <property type="match status" value="1"/>
</dbReference>
<dbReference type="NCBIfam" id="NF000940">
    <property type="entry name" value="PRK00094.1-2"/>
    <property type="match status" value="1"/>
</dbReference>
<dbReference type="NCBIfam" id="NF000942">
    <property type="entry name" value="PRK00094.1-4"/>
    <property type="match status" value="1"/>
</dbReference>
<dbReference type="PANTHER" id="PTHR11728">
    <property type="entry name" value="GLYCEROL-3-PHOSPHATE DEHYDROGENASE"/>
    <property type="match status" value="1"/>
</dbReference>
<dbReference type="PANTHER" id="PTHR11728:SF1">
    <property type="entry name" value="GLYCEROL-3-PHOSPHATE DEHYDROGENASE [NAD(+)] 2, CHLOROPLASTIC"/>
    <property type="match status" value="1"/>
</dbReference>
<dbReference type="Pfam" id="PF07479">
    <property type="entry name" value="NAD_Gly3P_dh_C"/>
    <property type="match status" value="1"/>
</dbReference>
<dbReference type="Pfam" id="PF01210">
    <property type="entry name" value="NAD_Gly3P_dh_N"/>
    <property type="match status" value="1"/>
</dbReference>
<dbReference type="PIRSF" id="PIRSF000114">
    <property type="entry name" value="Glycerol-3-P_dh"/>
    <property type="match status" value="1"/>
</dbReference>
<dbReference type="PRINTS" id="PR00077">
    <property type="entry name" value="GPDHDRGNASE"/>
</dbReference>
<dbReference type="SUPFAM" id="SSF48179">
    <property type="entry name" value="6-phosphogluconate dehydrogenase C-terminal domain-like"/>
    <property type="match status" value="1"/>
</dbReference>
<dbReference type="SUPFAM" id="SSF51735">
    <property type="entry name" value="NAD(P)-binding Rossmann-fold domains"/>
    <property type="match status" value="1"/>
</dbReference>
<dbReference type="PROSITE" id="PS00957">
    <property type="entry name" value="NAD_G3PDH"/>
    <property type="match status" value="1"/>
</dbReference>
<evidence type="ECO:0000255" key="1">
    <source>
        <dbReference type="HAMAP-Rule" id="MF_00394"/>
    </source>
</evidence>
<feature type="chain" id="PRO_1000123187" description="Glycerol-3-phosphate dehydrogenase [NAD(P)+]">
    <location>
        <begin position="1"/>
        <end position="339"/>
    </location>
</feature>
<feature type="active site" description="Proton acceptor" evidence="1">
    <location>
        <position position="195"/>
    </location>
</feature>
<feature type="binding site" evidence="1">
    <location>
        <position position="15"/>
    </location>
    <ligand>
        <name>NADPH</name>
        <dbReference type="ChEBI" id="CHEBI:57783"/>
    </ligand>
</feature>
<feature type="binding site" evidence="1">
    <location>
        <position position="16"/>
    </location>
    <ligand>
        <name>NADPH</name>
        <dbReference type="ChEBI" id="CHEBI:57783"/>
    </ligand>
</feature>
<feature type="binding site" evidence="1">
    <location>
        <position position="36"/>
    </location>
    <ligand>
        <name>NADPH</name>
        <dbReference type="ChEBI" id="CHEBI:57783"/>
    </ligand>
</feature>
<feature type="binding site" evidence="1">
    <location>
        <position position="110"/>
    </location>
    <ligand>
        <name>NADPH</name>
        <dbReference type="ChEBI" id="CHEBI:57783"/>
    </ligand>
</feature>
<feature type="binding site" evidence="1">
    <location>
        <position position="110"/>
    </location>
    <ligand>
        <name>sn-glycerol 3-phosphate</name>
        <dbReference type="ChEBI" id="CHEBI:57597"/>
    </ligand>
</feature>
<feature type="binding site" evidence="1">
    <location>
        <position position="139"/>
    </location>
    <ligand>
        <name>sn-glycerol 3-phosphate</name>
        <dbReference type="ChEBI" id="CHEBI:57597"/>
    </ligand>
</feature>
<feature type="binding site" evidence="1">
    <location>
        <position position="141"/>
    </location>
    <ligand>
        <name>sn-glycerol 3-phosphate</name>
        <dbReference type="ChEBI" id="CHEBI:57597"/>
    </ligand>
</feature>
<feature type="binding site" evidence="1">
    <location>
        <position position="143"/>
    </location>
    <ligand>
        <name>NADPH</name>
        <dbReference type="ChEBI" id="CHEBI:57783"/>
    </ligand>
</feature>
<feature type="binding site" evidence="1">
    <location>
        <position position="195"/>
    </location>
    <ligand>
        <name>sn-glycerol 3-phosphate</name>
        <dbReference type="ChEBI" id="CHEBI:57597"/>
    </ligand>
</feature>
<feature type="binding site" evidence="1">
    <location>
        <position position="248"/>
    </location>
    <ligand>
        <name>sn-glycerol 3-phosphate</name>
        <dbReference type="ChEBI" id="CHEBI:57597"/>
    </ligand>
</feature>
<feature type="binding site" evidence="1">
    <location>
        <position position="258"/>
    </location>
    <ligand>
        <name>sn-glycerol 3-phosphate</name>
        <dbReference type="ChEBI" id="CHEBI:57597"/>
    </ligand>
</feature>
<feature type="binding site" evidence="1">
    <location>
        <position position="259"/>
    </location>
    <ligand>
        <name>NADPH</name>
        <dbReference type="ChEBI" id="CHEBI:57783"/>
    </ligand>
</feature>
<feature type="binding site" evidence="1">
    <location>
        <position position="259"/>
    </location>
    <ligand>
        <name>sn-glycerol 3-phosphate</name>
        <dbReference type="ChEBI" id="CHEBI:57597"/>
    </ligand>
</feature>
<feature type="binding site" evidence="1">
    <location>
        <position position="260"/>
    </location>
    <ligand>
        <name>sn-glycerol 3-phosphate</name>
        <dbReference type="ChEBI" id="CHEBI:57597"/>
    </ligand>
</feature>
<feature type="binding site" evidence="1">
    <location>
        <position position="283"/>
    </location>
    <ligand>
        <name>NADPH</name>
        <dbReference type="ChEBI" id="CHEBI:57783"/>
    </ligand>
</feature>
<feature type="binding site" evidence="1">
    <location>
        <position position="285"/>
    </location>
    <ligand>
        <name>NADPH</name>
        <dbReference type="ChEBI" id="CHEBI:57783"/>
    </ligand>
</feature>
<gene>
    <name evidence="1" type="primary">gpsA</name>
    <name type="ordered locus">SeSA_A3899</name>
</gene>
<protein>
    <recommendedName>
        <fullName evidence="1">Glycerol-3-phosphate dehydrogenase [NAD(P)+]</fullName>
        <ecNumber evidence="1">1.1.1.94</ecNumber>
    </recommendedName>
    <alternativeName>
        <fullName evidence="1">NAD(P)(+)-dependent glycerol-3-phosphate dehydrogenase</fullName>
    </alternativeName>
    <alternativeName>
        <fullName evidence="1">NAD(P)H-dependent dihydroxyacetone-phosphate reductase</fullName>
    </alternativeName>
</protein>